<accession>P08473</accession>
<accession>A8K6U6</accession>
<accession>D3DNJ9</accession>
<accession>Q3MIX4</accession>
<feature type="initiator methionine" description="Removed">
    <location>
        <position position="1"/>
    </location>
</feature>
<feature type="chain" id="PRO_0000078213" description="Neprilysin">
    <location>
        <begin position="2"/>
        <end position="750"/>
    </location>
</feature>
<feature type="topological domain" description="Cytoplasmic" evidence="2">
    <location>
        <begin position="2"/>
        <end position="28"/>
    </location>
</feature>
<feature type="transmembrane region" description="Helical; Signal-anchor for type II membrane protein" evidence="2">
    <location>
        <begin position="29"/>
        <end position="51"/>
    </location>
</feature>
<feature type="topological domain" description="Extracellular" evidence="2">
    <location>
        <begin position="52"/>
        <end position="750"/>
    </location>
</feature>
<feature type="domain" description="Peptidase M13" evidence="3">
    <location>
        <begin position="56"/>
        <end position="750"/>
    </location>
</feature>
<feature type="region of interest" description="Disordered" evidence="5">
    <location>
        <begin position="1"/>
        <end position="20"/>
    </location>
</feature>
<feature type="short sequence motif" description="Stop-transfer sequence" evidence="2">
    <location>
        <begin position="16"/>
        <end position="23"/>
    </location>
</feature>
<feature type="compositionally biased region" description="Polar residues" evidence="5">
    <location>
        <begin position="1"/>
        <end position="14"/>
    </location>
</feature>
<feature type="active site" evidence="3 4">
    <location>
        <position position="585"/>
    </location>
</feature>
<feature type="active site" description="Proton donor" evidence="3 26">
    <location>
        <position position="651"/>
    </location>
</feature>
<feature type="binding site" evidence="1">
    <location>
        <position position="103"/>
    </location>
    <ligand>
        <name>a peptide</name>
        <dbReference type="ChEBI" id="CHEBI:60466"/>
        <note>substrate</note>
    </ligand>
</feature>
<feature type="binding site" evidence="3">
    <location>
        <position position="584"/>
    </location>
    <ligand>
        <name>Zn(2+)</name>
        <dbReference type="ChEBI" id="CHEBI:29105"/>
        <note>catalytic</note>
    </ligand>
</feature>
<feature type="binding site" evidence="3">
    <location>
        <position position="588"/>
    </location>
    <ligand>
        <name>Zn(2+)</name>
        <dbReference type="ChEBI" id="CHEBI:29105"/>
        <note>catalytic</note>
    </ligand>
</feature>
<feature type="binding site" evidence="3">
    <location>
        <position position="647"/>
    </location>
    <ligand>
        <name>Zn(2+)</name>
        <dbReference type="ChEBI" id="CHEBI:29105"/>
        <note>catalytic</note>
    </ligand>
</feature>
<feature type="modified residue" description="Phosphoserine" evidence="34">
    <location>
        <position position="4"/>
    </location>
</feature>
<feature type="modified residue" description="Phosphoserine" evidence="34">
    <location>
        <position position="6"/>
    </location>
</feature>
<feature type="lipid moiety-binding region" description="N-myristoyl glycine" evidence="12">
    <location>
        <position position="2"/>
    </location>
</feature>
<feature type="glycosylation site" description="N-linked (GlcNAc...) asparagine" evidence="6 7 8 11">
    <location>
        <position position="145"/>
    </location>
</feature>
<feature type="glycosylation site" description="N-linked (GlcNAc...) asparagine" evidence="7">
    <location>
        <position position="285"/>
    </location>
</feature>
<feature type="glycosylation site" description="N-linked (GlcNAc...) asparagine" evidence="6 8 11">
    <location>
        <position position="325"/>
    </location>
</feature>
<feature type="glycosylation site" description="N-linked (GlcNAc...) asparagine" evidence="6 8 11 14">
    <location>
        <position position="628"/>
    </location>
</feature>
<feature type="disulfide bond" evidence="3">
    <location>
        <begin position="57"/>
        <end position="62"/>
    </location>
</feature>
<feature type="disulfide bond" evidence="3">
    <location>
        <begin position="80"/>
        <end position="735"/>
    </location>
</feature>
<feature type="disulfide bond" evidence="3">
    <location>
        <begin position="88"/>
        <end position="695"/>
    </location>
</feature>
<feature type="disulfide bond" evidence="3">
    <location>
        <begin position="143"/>
        <end position="411"/>
    </location>
</feature>
<feature type="disulfide bond" evidence="3">
    <location>
        <begin position="234"/>
        <end position="242"/>
    </location>
</feature>
<feature type="disulfide bond" evidence="3">
    <location>
        <begin position="621"/>
        <end position="747"/>
    </location>
</feature>
<feature type="sequence variant" id="VAR_077684" description="In CMT2T; uncertain significance." evidence="20">
    <original>D</original>
    <variation>A</variation>
    <location>
        <position position="12"/>
    </location>
</feature>
<feature type="sequence variant" id="VAR_077685" description="In SCA43; dbSNP:rs879255651." evidence="19">
    <original>C</original>
    <variation>Y</variation>
    <location>
        <position position="143"/>
    </location>
</feature>
<feature type="sequence variant" id="VAR_077686" description="In CMT2T; results in reduction of neprilysin activity; dbSNP:rs138218277." evidence="20">
    <original>Y</original>
    <variation>C</variation>
    <location>
        <position position="347"/>
    </location>
</feature>
<feature type="sequence variant" id="VAR_077687" description="In CMT2T; uncertain significance; dbSNP:rs199567914." evidence="20">
    <original>A</original>
    <variation>P</variation>
    <location>
        <position position="348"/>
    </location>
</feature>
<feature type="sequence variant" id="VAR_077688" description="In CMT2T; uncertain significance." evidence="18">
    <location>
        <position position="411"/>
    </location>
</feature>
<feature type="sequence variant" id="VAR_077689" description="In CMT2T; late-onset form; results in reduction of neprilysin activity; dbSNP:rs777476150." evidence="20">
    <original>A</original>
    <variation>D</variation>
    <location>
        <position position="422"/>
    </location>
</feature>
<feature type="sequence variant" id="VAR_077690" description="In dbSNP:rs200308207." evidence="18">
    <original>Y</original>
    <variation>H</variation>
    <location>
        <position position="497"/>
    </location>
</feature>
<feature type="sequence variant" id="VAR_077691" description="In CMT2T; decrease of protein expression; dbSNP:rs879253752." evidence="18">
    <original>C</original>
    <variation>R</variation>
    <location>
        <position position="621"/>
    </location>
</feature>
<feature type="sequence conflict" description="In Ref. 4; AAA51915." evidence="32" ref="4">
    <original>P</original>
    <variation>R</variation>
    <location>
        <position position="26"/>
    </location>
</feature>
<feature type="sequence conflict" description="In Ref. 4; AAA51915." evidence="32" ref="4">
    <original>T</original>
    <variation>R</variation>
    <location>
        <position position="44"/>
    </location>
</feature>
<feature type="sequence conflict" description="In Ref. 4; AAA51915." evidence="32" ref="4">
    <original>T</original>
    <variation>R</variation>
    <location>
        <position position="81"/>
    </location>
</feature>
<feature type="sequence conflict" description="In Ref. 4; AAA51915." evidence="32" ref="4">
    <original>T</original>
    <variation>R</variation>
    <location>
        <position position="304"/>
    </location>
</feature>
<feature type="helix" evidence="38">
    <location>
        <begin position="60"/>
        <end position="72"/>
    </location>
</feature>
<feature type="turn" evidence="38">
    <location>
        <begin position="79"/>
        <end position="81"/>
    </location>
</feature>
<feature type="helix" evidence="38">
    <location>
        <begin position="83"/>
        <end position="94"/>
    </location>
</feature>
<feature type="strand" evidence="38">
    <location>
        <begin position="102"/>
        <end position="105"/>
    </location>
</feature>
<feature type="helix" evidence="38">
    <location>
        <begin position="106"/>
        <end position="122"/>
    </location>
</feature>
<feature type="helix" evidence="38">
    <location>
        <begin position="131"/>
        <end position="144"/>
    </location>
</feature>
<feature type="helix" evidence="38">
    <location>
        <begin position="146"/>
        <end position="151"/>
    </location>
</feature>
<feature type="turn" evidence="38">
    <location>
        <begin position="152"/>
        <end position="154"/>
    </location>
</feature>
<feature type="helix" evidence="38">
    <location>
        <begin position="155"/>
        <end position="160"/>
    </location>
</feature>
<feature type="helix" evidence="38">
    <location>
        <begin position="161"/>
        <end position="164"/>
    </location>
</feature>
<feature type="helix" evidence="38">
    <location>
        <begin position="168"/>
        <end position="170"/>
    </location>
</feature>
<feature type="strand" evidence="35">
    <location>
        <begin position="171"/>
        <end position="173"/>
    </location>
</feature>
<feature type="helix" evidence="38">
    <location>
        <begin position="174"/>
        <end position="177"/>
    </location>
</feature>
<feature type="turn" evidence="38">
    <location>
        <begin position="178"/>
        <end position="181"/>
    </location>
</feature>
<feature type="helix" evidence="38">
    <location>
        <begin position="184"/>
        <end position="195"/>
    </location>
</feature>
<feature type="strand" evidence="38">
    <location>
        <begin position="200"/>
        <end position="208"/>
    </location>
</feature>
<feature type="strand" evidence="38">
    <location>
        <begin position="211"/>
        <end position="220"/>
    </location>
</feature>
<feature type="strand" evidence="38">
    <location>
        <begin position="225"/>
        <end position="228"/>
    </location>
</feature>
<feature type="helix" evidence="38">
    <location>
        <begin position="229"/>
        <end position="233"/>
    </location>
</feature>
<feature type="helix" evidence="38">
    <location>
        <begin position="236"/>
        <end position="238"/>
    </location>
</feature>
<feature type="helix" evidence="38">
    <location>
        <begin position="239"/>
        <end position="259"/>
    </location>
</feature>
<feature type="helix" evidence="38">
    <location>
        <begin position="266"/>
        <end position="286"/>
    </location>
</feature>
<feature type="helix" evidence="38">
    <location>
        <begin position="290"/>
        <end position="293"/>
    </location>
</feature>
<feature type="helix" evidence="38">
    <location>
        <begin position="296"/>
        <end position="299"/>
    </location>
</feature>
<feature type="strand" evidence="38">
    <location>
        <begin position="302"/>
        <end position="304"/>
    </location>
</feature>
<feature type="helix" evidence="38">
    <location>
        <begin position="305"/>
        <end position="311"/>
    </location>
</feature>
<feature type="strand" evidence="35">
    <location>
        <begin position="316"/>
        <end position="319"/>
    </location>
</feature>
<feature type="helix" evidence="38">
    <location>
        <begin position="323"/>
        <end position="331"/>
    </location>
</feature>
<feature type="helix" evidence="38">
    <location>
        <begin position="332"/>
        <end position="334"/>
    </location>
</feature>
<feature type="strand" evidence="38">
    <location>
        <begin position="343"/>
        <end position="347"/>
    </location>
</feature>
<feature type="helix" evidence="38">
    <location>
        <begin position="349"/>
        <end position="359"/>
    </location>
</feature>
<feature type="helix" evidence="38">
    <location>
        <begin position="364"/>
        <end position="379"/>
    </location>
</feature>
<feature type="helix" evidence="38">
    <location>
        <begin position="380"/>
        <end position="382"/>
    </location>
</feature>
<feature type="helix" evidence="38">
    <location>
        <begin position="385"/>
        <end position="389"/>
    </location>
</feature>
<feature type="helix" evidence="38">
    <location>
        <begin position="392"/>
        <end position="399"/>
    </location>
</feature>
<feature type="helix" evidence="38">
    <location>
        <begin position="407"/>
        <end position="418"/>
    </location>
</feature>
<feature type="helix" evidence="38">
    <location>
        <begin position="420"/>
        <end position="431"/>
    </location>
</feature>
<feature type="helix" evidence="38">
    <location>
        <begin position="436"/>
        <end position="457"/>
    </location>
</feature>
<feature type="strand" evidence="37">
    <location>
        <begin position="459"/>
        <end position="461"/>
    </location>
</feature>
<feature type="helix" evidence="38">
    <location>
        <begin position="463"/>
        <end position="475"/>
    </location>
</feature>
<feature type="strand" evidence="38">
    <location>
        <begin position="477"/>
        <end position="481"/>
    </location>
</feature>
<feature type="helix" evidence="38">
    <location>
        <begin position="485"/>
        <end position="488"/>
    </location>
</feature>
<feature type="helix" evidence="38">
    <location>
        <begin position="490"/>
        <end position="496"/>
    </location>
</feature>
<feature type="turn" evidence="38">
    <location>
        <begin position="497"/>
        <end position="499"/>
    </location>
</feature>
<feature type="helix" evidence="38">
    <location>
        <begin position="507"/>
        <end position="524"/>
    </location>
</feature>
<feature type="turn" evidence="38">
    <location>
        <begin position="525"/>
        <end position="527"/>
    </location>
</feature>
<feature type="strand" evidence="38">
    <location>
        <begin position="545"/>
        <end position="547"/>
    </location>
</feature>
<feature type="turn" evidence="38">
    <location>
        <begin position="548"/>
        <end position="551"/>
    </location>
</feature>
<feature type="strand" evidence="38">
    <location>
        <begin position="552"/>
        <end position="556"/>
    </location>
</feature>
<feature type="helix" evidence="38">
    <location>
        <begin position="557"/>
        <end position="559"/>
    </location>
</feature>
<feature type="turn" evidence="38">
    <location>
        <begin position="562"/>
        <end position="564"/>
    </location>
</feature>
<feature type="strand" evidence="36">
    <location>
        <begin position="567"/>
        <end position="569"/>
    </location>
</feature>
<feature type="helix" evidence="38">
    <location>
        <begin position="571"/>
        <end position="576"/>
    </location>
</feature>
<feature type="helix" evidence="38">
    <location>
        <begin position="578"/>
        <end position="588"/>
    </location>
</feature>
<feature type="helix" evidence="38">
    <location>
        <begin position="594"/>
        <end position="596"/>
    </location>
</feature>
<feature type="helix" evidence="38">
    <location>
        <begin position="609"/>
        <end position="627"/>
    </location>
</feature>
<feature type="helix" evidence="38">
    <location>
        <begin position="632"/>
        <end position="634"/>
    </location>
</feature>
<feature type="strand" evidence="36">
    <location>
        <begin position="636"/>
        <end position="638"/>
    </location>
</feature>
<feature type="turn" evidence="38">
    <location>
        <begin position="641"/>
        <end position="644"/>
    </location>
</feature>
<feature type="helix" evidence="38">
    <location>
        <begin position="645"/>
        <end position="669"/>
    </location>
</feature>
<feature type="helix" evidence="38">
    <location>
        <begin position="682"/>
        <end position="692"/>
    </location>
</feature>
<feature type="strand" evidence="38">
    <location>
        <begin position="696"/>
        <end position="698"/>
    </location>
</feature>
<feature type="helix" evidence="38">
    <location>
        <begin position="700"/>
        <end position="709"/>
    </location>
</feature>
<feature type="helix" evidence="38">
    <location>
        <begin position="715"/>
        <end position="724"/>
    </location>
</feature>
<feature type="helix" evidence="38">
    <location>
        <begin position="727"/>
        <end position="732"/>
    </location>
</feature>
<proteinExistence type="evidence at protein level"/>
<reference key="1">
    <citation type="journal article" date="1988" name="J. Exp. Med.">
        <title>Common acute lymphocytic leukemia antigen is identical to neutral endopeptidase.</title>
        <authorList>
            <person name="Letarte M."/>
            <person name="Vera S."/>
            <person name="Tran R."/>
            <person name="Addis J.B.L."/>
            <person name="Onizuka R.J."/>
            <person name="Quackenbush E.J."/>
            <person name="Jongeneel C.V."/>
            <person name="McInnes R.R."/>
        </authorList>
    </citation>
    <scope>NUCLEOTIDE SEQUENCE [MRNA]</scope>
    <source>
        <tissue>Kidney</tissue>
    </source>
</reference>
<reference key="2">
    <citation type="journal article" date="1988" name="Proc. Natl. Acad. Sci. U.S.A.">
        <title>Molecular cloning of the common acute lymphoblastic leukemia antigen (CALLA) identifies a type II integral membrane protein.</title>
        <authorList>
            <person name="Shipp M.A."/>
            <person name="Richardson N.E."/>
            <person name="Sayre P.H."/>
            <person name="Brown N.R."/>
            <person name="Masteller E.L."/>
            <person name="Clayton L.K."/>
            <person name="Ritz J."/>
            <person name="Reinherz E.L."/>
        </authorList>
    </citation>
    <scope>NUCLEOTIDE SEQUENCE [MRNA]</scope>
</reference>
<reference key="3">
    <citation type="journal article" date="1989" name="Proc. Natl. Acad. Sci. U.S.A.">
        <title>Organization of the gene encoding common acute lymphoblastic leukemia antigen (neutral endopeptidase 24.11): multiple miniexons and separate 5' untranslated regions.</title>
        <authorList>
            <person name="D'Adamio L."/>
            <person name="Shipp M.A."/>
            <person name="Masteller E.L."/>
            <person name="Reinherz E.L."/>
        </authorList>
    </citation>
    <scope>NUCLEOTIDE SEQUENCE [GENOMIC DNA]</scope>
</reference>
<reference key="4">
    <citation type="journal article" date="2004" name="Nat. Genet.">
        <title>Complete sequencing and characterization of 21,243 full-length human cDNAs.</title>
        <authorList>
            <person name="Ota T."/>
            <person name="Suzuki Y."/>
            <person name="Nishikawa T."/>
            <person name="Otsuki T."/>
            <person name="Sugiyama T."/>
            <person name="Irie R."/>
            <person name="Wakamatsu A."/>
            <person name="Hayashi K."/>
            <person name="Sato H."/>
            <person name="Nagai K."/>
            <person name="Kimura K."/>
            <person name="Makita H."/>
            <person name="Sekine M."/>
            <person name="Obayashi M."/>
            <person name="Nishi T."/>
            <person name="Shibahara T."/>
            <person name="Tanaka T."/>
            <person name="Ishii S."/>
            <person name="Yamamoto J."/>
            <person name="Saito K."/>
            <person name="Kawai Y."/>
            <person name="Isono Y."/>
            <person name="Nakamura Y."/>
            <person name="Nagahari K."/>
            <person name="Murakami K."/>
            <person name="Yasuda T."/>
            <person name="Iwayanagi T."/>
            <person name="Wagatsuma M."/>
            <person name="Shiratori A."/>
            <person name="Sudo H."/>
            <person name="Hosoiri T."/>
            <person name="Kaku Y."/>
            <person name="Kodaira H."/>
            <person name="Kondo H."/>
            <person name="Sugawara M."/>
            <person name="Takahashi M."/>
            <person name="Kanda K."/>
            <person name="Yokoi T."/>
            <person name="Furuya T."/>
            <person name="Kikkawa E."/>
            <person name="Omura Y."/>
            <person name="Abe K."/>
            <person name="Kamihara K."/>
            <person name="Katsuta N."/>
            <person name="Sato K."/>
            <person name="Tanikawa M."/>
            <person name="Yamazaki M."/>
            <person name="Ninomiya K."/>
            <person name="Ishibashi T."/>
            <person name="Yamashita H."/>
            <person name="Murakawa K."/>
            <person name="Fujimori K."/>
            <person name="Tanai H."/>
            <person name="Kimata M."/>
            <person name="Watanabe M."/>
            <person name="Hiraoka S."/>
            <person name="Chiba Y."/>
            <person name="Ishida S."/>
            <person name="Ono Y."/>
            <person name="Takiguchi S."/>
            <person name="Watanabe S."/>
            <person name="Yosida M."/>
            <person name="Hotuta T."/>
            <person name="Kusano J."/>
            <person name="Kanehori K."/>
            <person name="Takahashi-Fujii A."/>
            <person name="Hara H."/>
            <person name="Tanase T.-O."/>
            <person name="Nomura Y."/>
            <person name="Togiya S."/>
            <person name="Komai F."/>
            <person name="Hara R."/>
            <person name="Takeuchi K."/>
            <person name="Arita M."/>
            <person name="Imose N."/>
            <person name="Musashino K."/>
            <person name="Yuuki H."/>
            <person name="Oshima A."/>
            <person name="Sasaki N."/>
            <person name="Aotsuka S."/>
            <person name="Yoshikawa Y."/>
            <person name="Matsunawa H."/>
            <person name="Ichihara T."/>
            <person name="Shiohata N."/>
            <person name="Sano S."/>
            <person name="Moriya S."/>
            <person name="Momiyama H."/>
            <person name="Satoh N."/>
            <person name="Takami S."/>
            <person name="Terashima Y."/>
            <person name="Suzuki O."/>
            <person name="Nakagawa S."/>
            <person name="Senoh A."/>
            <person name="Mizoguchi H."/>
            <person name="Goto Y."/>
            <person name="Shimizu F."/>
            <person name="Wakebe H."/>
            <person name="Hishigaki H."/>
            <person name="Watanabe T."/>
            <person name="Sugiyama A."/>
            <person name="Takemoto M."/>
            <person name="Kawakami B."/>
            <person name="Yamazaki M."/>
            <person name="Watanabe K."/>
            <person name="Kumagai A."/>
            <person name="Itakura S."/>
            <person name="Fukuzumi Y."/>
            <person name="Fujimori Y."/>
            <person name="Komiyama M."/>
            <person name="Tashiro H."/>
            <person name="Tanigami A."/>
            <person name="Fujiwara T."/>
            <person name="Ono T."/>
            <person name="Yamada K."/>
            <person name="Fujii Y."/>
            <person name="Ozaki K."/>
            <person name="Hirao M."/>
            <person name="Ohmori Y."/>
            <person name="Kawabata A."/>
            <person name="Hikiji T."/>
            <person name="Kobatake N."/>
            <person name="Inagaki H."/>
            <person name="Ikema Y."/>
            <person name="Okamoto S."/>
            <person name="Okitani R."/>
            <person name="Kawakami T."/>
            <person name="Noguchi S."/>
            <person name="Itoh T."/>
            <person name="Shigeta K."/>
            <person name="Senba T."/>
            <person name="Matsumura K."/>
            <person name="Nakajima Y."/>
            <person name="Mizuno T."/>
            <person name="Morinaga M."/>
            <person name="Sasaki M."/>
            <person name="Togashi T."/>
            <person name="Oyama M."/>
            <person name="Hata H."/>
            <person name="Watanabe M."/>
            <person name="Komatsu T."/>
            <person name="Mizushima-Sugano J."/>
            <person name="Satoh T."/>
            <person name="Shirai Y."/>
            <person name="Takahashi Y."/>
            <person name="Nakagawa K."/>
            <person name="Okumura K."/>
            <person name="Nagase T."/>
            <person name="Nomura N."/>
            <person name="Kikuchi H."/>
            <person name="Masuho Y."/>
            <person name="Yamashita R."/>
            <person name="Nakai K."/>
            <person name="Yada T."/>
            <person name="Nakamura Y."/>
            <person name="Ohara O."/>
            <person name="Isogai T."/>
            <person name="Sugano S."/>
        </authorList>
    </citation>
    <scope>NUCLEOTIDE SEQUENCE [LARGE SCALE MRNA]</scope>
    <source>
        <tissue>Placenta</tissue>
    </source>
</reference>
<reference key="5">
    <citation type="submission" date="2007-12" db="EMBL/GenBank/DDBJ databases">
        <authorList>
            <consortium name="NHLBI resequencing and genotyping service (RS&amp;G)"/>
        </authorList>
    </citation>
    <scope>NUCLEOTIDE SEQUENCE [GENOMIC DNA]</scope>
</reference>
<reference key="6">
    <citation type="submission" date="2005-09" db="EMBL/GenBank/DDBJ databases">
        <authorList>
            <person name="Mural R.J."/>
            <person name="Istrail S."/>
            <person name="Sutton G.G."/>
            <person name="Florea L."/>
            <person name="Halpern A.L."/>
            <person name="Mobarry C.M."/>
            <person name="Lippert R."/>
            <person name="Walenz B."/>
            <person name="Shatkay H."/>
            <person name="Dew I."/>
            <person name="Miller J.R."/>
            <person name="Flanigan M.J."/>
            <person name="Edwards N.J."/>
            <person name="Bolanos R."/>
            <person name="Fasulo D."/>
            <person name="Halldorsson B.V."/>
            <person name="Hannenhalli S."/>
            <person name="Turner R."/>
            <person name="Yooseph S."/>
            <person name="Lu F."/>
            <person name="Nusskern D.R."/>
            <person name="Shue B.C."/>
            <person name="Zheng X.H."/>
            <person name="Zhong F."/>
            <person name="Delcher A.L."/>
            <person name="Huson D.H."/>
            <person name="Kravitz S.A."/>
            <person name="Mouchard L."/>
            <person name="Reinert K."/>
            <person name="Remington K.A."/>
            <person name="Clark A.G."/>
            <person name="Waterman M.S."/>
            <person name="Eichler E.E."/>
            <person name="Adams M.D."/>
            <person name="Hunkapiller M.W."/>
            <person name="Myers E.W."/>
            <person name="Venter J.C."/>
        </authorList>
    </citation>
    <scope>NUCLEOTIDE SEQUENCE [LARGE SCALE GENOMIC DNA]</scope>
</reference>
<reference key="7">
    <citation type="journal article" date="2004" name="Genome Res.">
        <title>The status, quality, and expansion of the NIH full-length cDNA project: the Mammalian Gene Collection (MGC).</title>
        <authorList>
            <consortium name="The MGC Project Team"/>
        </authorList>
    </citation>
    <scope>NUCLEOTIDE SEQUENCE [LARGE SCALE MRNA]</scope>
    <source>
        <tissue>Brain</tissue>
    </source>
</reference>
<reference key="8">
    <citation type="journal article" date="1988" name="FEBS Lett.">
        <title>Molecular cloning and amino acid sequence of human enkephalinase (neutral endopeptidase).</title>
        <authorList>
            <person name="Malfroy B."/>
            <person name="Kuang W.-J."/>
            <person name="Seeburg P.H."/>
            <person name="Mason A.J."/>
            <person name="Schofield P.R."/>
        </authorList>
    </citation>
    <scope>NUCLEOTIDE SEQUENCE [MRNA] OF 3-750</scope>
    <source>
        <tissue>Placenta</tissue>
    </source>
</reference>
<reference key="9">
    <citation type="journal article" date="1983" name="Biochemistry">
        <title>Human kidney 'enkephalinase', a neutral metalloendopeptidase that cleaves active peptides.</title>
        <authorList>
            <person name="Gafford J.T."/>
            <person name="Skidgel R.A."/>
            <person name="Erdoes E.G."/>
            <person name="Hersh L.B."/>
        </authorList>
    </citation>
    <scope>FUNCTION</scope>
    <scope>CATALYTIC ACTIVITY</scope>
</reference>
<reference key="10">
    <citation type="journal article" date="1984" name="Peptides">
        <title>Hydrolysis of substance p and neurotensin by converting enzyme and neutral endopeptidase.</title>
        <authorList>
            <person name="Skidgel R.A."/>
            <person name="Engelbrecht S."/>
            <person name="Johnson A.R."/>
            <person name="Erdoes E.G."/>
        </authorList>
    </citation>
    <scope>FUNCTION</scope>
    <scope>CATALYTIC ACTIVITY</scope>
</reference>
<reference key="11">
    <citation type="journal article" date="1988" name="Biochem. J.">
        <title>Hydrolysis of alpha-human atrial natriuretic peptide in vitro by human kidney membranes and purified endopeptidase-24.11. Evidence for a novel cleavage site.</title>
        <authorList>
            <person name="Vanneste Y."/>
            <person name="Michel A."/>
            <person name="Dimaline R."/>
            <person name="Najdovski T."/>
            <person name="Deschodt-Lanckman M."/>
        </authorList>
    </citation>
    <scope>FUNCTION</scope>
</reference>
<reference key="12">
    <citation type="journal article" date="1989" name="Peptides">
        <title>Endopeptidase-24.11 in human plasma degrades atrial natriuretic factor (ANF) to ANF(99-105/106-126).</title>
        <authorList>
            <person name="Yandle T.G."/>
            <person name="Brennan S.O."/>
            <person name="Espiner E.A."/>
            <person name="Nicholls M.G."/>
            <person name="Richards A.M."/>
        </authorList>
    </citation>
    <scope>FUNCTION IN THE DEGRADATION OF ANF</scope>
</reference>
<reference key="13">
    <citation type="journal article" date="1994" name="Eur. J. Biochem.">
        <title>Asp650 is crucial for catalytic activity of neutral endopeptidase 24-11.</title>
        <authorList>
            <person name="Le Moual H."/>
            <person name="Dion N."/>
            <person name="Roques B.P."/>
            <person name="Crine P."/>
            <person name="Boileau G."/>
        </authorList>
    </citation>
    <scope>ACTIVE SITE ASP-651</scope>
    <scope>CATALYTIC ACTIVITY</scope>
</reference>
<reference key="14">
    <citation type="journal article" date="2003" name="Nat. Biotechnol.">
        <title>Identification and quantification of N-linked glycoproteins using hydrazide chemistry, stable isotope labeling and mass spectrometry.</title>
        <authorList>
            <person name="Zhang H."/>
            <person name="Li X.-J."/>
            <person name="Martin D.B."/>
            <person name="Aebersold R."/>
        </authorList>
    </citation>
    <scope>GLYCOSYLATION AT ASN-145 AND ASN-285</scope>
</reference>
<reference key="15">
    <citation type="journal article" date="2004" name="Biochem. J.">
        <title>Evaluation of angiotensin-converting enzyme (ACE), its homologue ACE2 and neprilysin in angiotensin peptide metabolism.</title>
        <authorList>
            <person name="Rice G.I."/>
            <person name="Thomas D.A."/>
            <person name="Grant P.J."/>
            <person name="Turner A.J."/>
            <person name="Hooper N.M."/>
        </authorList>
    </citation>
    <scope>FUNCTION IN ANGIOTENSIN PEPTIDE METABOLISM</scope>
    <scope>BIOPHYSICOCHEMICAL PROPERTIES</scope>
    <scope>CATALYTIC ACTIVITY</scope>
</reference>
<reference key="16">
    <citation type="journal article" date="2006" name="Clin. Chem.">
        <title>Dipeptidyl-peptidase IV converts intact B-type natriuretic peptide into its des-SerPro form.</title>
        <authorList>
            <person name="Brandt I."/>
            <person name="Lambeir A.M."/>
            <person name="Ketelslegers J.M."/>
            <person name="Vanderheyden M."/>
            <person name="Scharpe S."/>
            <person name="De Meester I."/>
        </authorList>
    </citation>
    <scope>FUNCTION</scope>
</reference>
<reference key="17">
    <citation type="journal article" date="2006" name="Proc. Natl. Acad. Sci. U.S.A.">
        <title>Human opiorphin, a natural antinociceptive modulator of opioid-dependent pathways.</title>
        <authorList>
            <person name="Wisner A."/>
            <person name="Dufour E."/>
            <person name="Messaoudi M."/>
            <person name="Nejdi A."/>
            <person name="Marcel A."/>
            <person name="Ungeheuer M.-N."/>
            <person name="Rougeot C."/>
        </authorList>
    </citation>
    <scope>FUNCTION</scope>
    <scope>ACTIVITY REGULATION</scope>
    <scope>INHIBITION BY OPIORPHIN</scope>
</reference>
<reference key="18">
    <citation type="journal article" date="2010" name="J. Biol. Chem.">
        <title>Neprilysin is identical to skin fibroblast elastase: its role in skin aging and UV responses.</title>
        <authorList>
            <person name="Morisaki N."/>
            <person name="Moriwaki S."/>
            <person name="Sugiyama-Nakagiri Y."/>
            <person name="Haketa K."/>
            <person name="Takema Y."/>
            <person name="Imokawa G."/>
        </authorList>
    </citation>
    <scope>IDENTIFICATION AS SKIN FIBROBLAST ELASTASE</scope>
    <scope>FUNCTION</scope>
    <scope>SUBCELLULAR LOCATION</scope>
</reference>
<reference key="19">
    <citation type="journal article" date="2010" name="Mol. Cell. Biochem.">
        <title>Neutral endopeptidase is a myristoylated protein.</title>
        <authorList>
            <person name="Zheng R."/>
            <person name="Horiguchi A."/>
            <person name="Iida K."/>
            <person name="Lee J."/>
            <person name="Shen R."/>
            <person name="Goodman O.B. Jr."/>
            <person name="Nanus D.M."/>
        </authorList>
    </citation>
    <scope>MYRISTOYLATION AT GLY-2</scope>
</reference>
<reference key="20">
    <citation type="journal article" date="2012" name="Biochim. Biophys. Acta">
        <title>The human CD10 lacking an N-glycan at Asn(628) is deficient in surface expression and neutral endopeptidase activity.</title>
        <authorList>
            <person name="Sato B."/>
            <person name="Katagiri Y.U."/>
            <person name="Iijima K."/>
            <person name="Yamada H."/>
            <person name="Ito S."/>
            <person name="Kawasaki N."/>
            <person name="Okita H."/>
            <person name="Fujimoto J."/>
            <person name="Kiyokawa N."/>
        </authorList>
    </citation>
    <scope>GLYCOSYLATION AT ASN-628</scope>
</reference>
<reference key="21">
    <citation type="journal article" date="2014" name="J. Proteomics">
        <title>An enzyme assisted RP-RPLC approach for in-depth analysis of human liver phosphoproteome.</title>
        <authorList>
            <person name="Bian Y."/>
            <person name="Song C."/>
            <person name="Cheng K."/>
            <person name="Dong M."/>
            <person name="Wang F."/>
            <person name="Huang J."/>
            <person name="Sun D."/>
            <person name="Wang L."/>
            <person name="Ye M."/>
            <person name="Zou H."/>
        </authorList>
    </citation>
    <scope>PHOSPHORYLATION [LARGE SCALE ANALYSIS] AT SER-4 AND SER-6</scope>
    <scope>IDENTIFICATION BY MASS SPECTROMETRY [LARGE SCALE ANALYSIS]</scope>
    <source>
        <tissue>Liver</tissue>
    </source>
</reference>
<reference key="22">
    <citation type="journal article" date="2016" name="Am. J. Hum. Genet.">
        <title>Rare variants in MME, encoding metalloprotease neprilysin, are linked to late-onset autosomal-dominant axonal polyneuropathies.</title>
        <authorList>
            <person name="Auer-Grumbach M."/>
            <person name="Toegel S."/>
            <person name="Schabhuettl M."/>
            <person name="Weinmann D."/>
            <person name="Chiari C."/>
            <person name="Bennett D.L."/>
            <person name="Beetz C."/>
            <person name="Klein D."/>
            <person name="Andersen P.M."/>
            <person name="Boehme I."/>
            <person name="Fink-Puches R."/>
            <person name="Gonzalez M."/>
            <person name="Harms M.B."/>
            <person name="Motley W."/>
            <person name="Reilly M.M."/>
            <person name="Renner W."/>
            <person name="Rudnik-Schoeneborn S."/>
            <person name="Schlotter-Weigel B."/>
            <person name="Themistocleous A.C."/>
            <person name="Weishaupt J.H."/>
            <person name="Ludolph A.C."/>
            <person name="Wieland T."/>
            <person name="Tao F."/>
            <person name="Abreu L."/>
            <person name="Windhager R."/>
            <person name="Zitzelsberger M."/>
            <person name="Strom T.M."/>
            <person name="Walther T."/>
            <person name="Scherer S.S."/>
            <person name="Zuechner S."/>
            <person name="Martini R."/>
            <person name="Senderek J."/>
        </authorList>
    </citation>
    <scope>FUNCTION</scope>
    <scope>CATALYTIC ACTIVITY</scope>
    <scope>INVOLVEMENT IN CMT2T</scope>
    <scope>VARIANTS CMT2T ALA-12; CYS-347; PRO-348 AND ASP-422</scope>
    <scope>CHARACTERIZATION OF VARIANTS CMT2T CYS-347 AND ASP-422</scope>
</reference>
<reference key="23">
    <citation type="journal article" date="2016" name="Ann. Neurol.">
        <title>Mutations in MME cause an autosomal-recessive Charcot-Marie-Tooth disease type 2.</title>
        <authorList>
            <person name="Higuchi Y."/>
            <person name="Hashiguchi A."/>
            <person name="Yuan J."/>
            <person name="Yoshimura A."/>
            <person name="Mitsui J."/>
            <person name="Ishiura H."/>
            <person name="Tanaka M."/>
            <person name="Ishihara S."/>
            <person name="Tanabe H."/>
            <person name="Nozuma S."/>
            <person name="Okamoto Y."/>
            <person name="Matsuura E."/>
            <person name="Ohkubo R."/>
            <person name="Inamizu S."/>
            <person name="Shiraishi W."/>
            <person name="Yamasaki R."/>
            <person name="Ohyagi Y."/>
            <person name="Kira J."/>
            <person name="Oya Y."/>
            <person name="Yabe H."/>
            <person name="Nishikawa N."/>
            <person name="Tobisawa S."/>
            <person name="Matsuda N."/>
            <person name="Masuda M."/>
            <person name="Kugimoto C."/>
            <person name="Fukushima K."/>
            <person name="Yano S."/>
            <person name="Yoshimura J."/>
            <person name="Doi K."/>
            <person name="Nakagawa M."/>
            <person name="Morishita S."/>
            <person name="Tsuji S."/>
            <person name="Takashima H."/>
        </authorList>
    </citation>
    <scope>INVOLVEMENT IN CMT2T</scope>
    <scope>VARIANTS CMT2T CYS-411 DEL AND ARG-621</scope>
    <scope>VARIANT HIS-497</scope>
    <scope>CHARACTERIZATION OF VARIANT CMT2T ARG-621</scope>
</reference>
<reference key="24">
    <citation type="journal article" date="2016" name="Neurol. Genet.">
        <title>MME mutation in dominant spinocerebellar ataxia with neuropathy (SCA43).</title>
        <authorList>
            <person name="Depondt C."/>
            <person name="Donatello S."/>
            <person name="Rai M."/>
            <person name="Wang F.C."/>
            <person name="Manto M."/>
            <person name="Simonis N."/>
            <person name="Pandolfo M."/>
        </authorList>
    </citation>
    <scope>INVOLVEMENT IN SCA43</scope>
    <scope>VARIANT SCA43 TYR-143</scope>
</reference>
<reference key="25">
    <citation type="journal article" date="2016" name="Sci. Rep.">
        <title>N-terminal domain of Bothrops asper Myotoxin II enhances the activity of endothelin converting enzyme-1 and neprilysin.</title>
        <authorList>
            <person name="Smith A.I."/>
            <person name="Rajapakse N.W."/>
            <person name="Kleifeld O."/>
            <person name="Lomonte B."/>
            <person name="Sikanyika N.L."/>
            <person name="Spicer A.J."/>
            <person name="Hodgson W.C."/>
            <person name="Conroy P.J."/>
            <person name="Small D.H."/>
            <person name="Kaye D.M."/>
            <person name="Parkington H.C."/>
            <person name="Whisstock J.C."/>
            <person name="Kuruppu S."/>
        </authorList>
    </citation>
    <scope>ACTIVITY REGULATION</scope>
</reference>
<reference key="26">
    <citation type="journal article" date="2016" name="Sci. Rep.">
        <title>Corrigendum: N-terminal domain of Bothrops asper Myotoxin II enhances the activity of endothelin converting enzyme-1 and neprilysin.</title>
        <authorList>
            <person name="Smith A.I."/>
            <person name="Rajapakse N.W."/>
            <person name="Kleifeld O."/>
            <person name="Lomonte B."/>
            <person name="Sikanyika N.L."/>
            <person name="Spicer A.J."/>
            <person name="Hodgson W.C."/>
            <person name="Conroy P.J."/>
            <person name="Small D.H."/>
            <person name="Kaye D.M."/>
            <person name="Parkington H.C."/>
            <person name="Whisstock J.C."/>
            <person name="Kuruppu S."/>
        </authorList>
    </citation>
    <scope>ERRATUM OF PUBMED:26931059</scope>
</reference>
<reference key="27">
    <citation type="journal article" date="2000" name="J. Mol. Biol.">
        <title>Structure of human neutral endopeptidase (Neprilysin) complexed with phosphoramidon.</title>
        <authorList>
            <person name="Oefner C."/>
            <person name="D'Arcy A."/>
            <person name="Hennig M."/>
            <person name="Winkler F.K."/>
            <person name="Dale G.E."/>
        </authorList>
    </citation>
    <scope>X-RAY CRYSTALLOGRAPHY (2.1 ANGSTROMS)</scope>
    <scope>GLYCOSYLATION AT ASN-145; ASN-325 AND ASN-628</scope>
</reference>
<reference key="28">
    <citation type="journal article" date="2004" name="Acta Crystallogr. D">
        <title>Structural analysis of neprilysin with various specific and potent inhibitors.</title>
        <authorList>
            <person name="Oefner C."/>
            <person name="Roques B.P."/>
            <person name="Fournie-Zaluski M.-C."/>
            <person name="Dale G.E."/>
        </authorList>
    </citation>
    <scope>X-RAY CRYSTALLOGRAPHY (1.95 ANGSTROMS) OF 55-750 IN COMPLEXES WITH ZINC IONS AND SYNTHETIC INHIBITORS</scope>
    <scope>DISULFIDE BONDS</scope>
    <scope>COFACTOR</scope>
    <scope>GLYCOSYLATION AT ASN-145; ASN-325 AND ASN-628</scope>
</reference>
<reference key="29">
    <citation type="journal article" date="2007" name="Acta Crystallogr. D">
        <title>Structural studies of a bifunctional inhibitor of neprilysin and DPP-IV.</title>
        <authorList>
            <person name="Oefner C."/>
            <person name="Pierau S."/>
            <person name="Schulz H."/>
            <person name="Dale G.E."/>
        </authorList>
    </citation>
    <scope>X-RAY CRYSTALLOGRAPHY (2.05 ANGSTROMS) OF 55-750 IN COMPLEX WITH ZINC IONS AND THE SYNTHETIC INHIBITOR MCB3937</scope>
    <scope>DISULFIDE BONDS</scope>
    <scope>COFACTOR</scope>
    <scope>GLYCOSYLATION AT ASN-145; ASN-325 AND ASN-628</scope>
</reference>
<protein>
    <recommendedName>
        <fullName evidence="27">Neprilysin</fullName>
        <ecNumber evidence="9 20 24 25 26">3.4.24.11</ecNumber>
    </recommendedName>
    <alternativeName>
        <fullName>Atriopeptidase</fullName>
    </alternativeName>
    <alternativeName>
        <fullName>Common acute lymphocytic leukemia antigen</fullName>
        <shortName>CALLA</shortName>
    </alternativeName>
    <alternativeName>
        <fullName evidence="31">Enkephalinase</fullName>
    </alternativeName>
    <alternativeName>
        <fullName evidence="29">Neutral endopeptidase 24.11</fullName>
        <shortName>NEP</shortName>
        <shortName>Neutral endopeptidase</shortName>
    </alternativeName>
    <alternativeName>
        <fullName>Skin fibroblast elastase</fullName>
        <shortName>SFE</shortName>
    </alternativeName>
    <cdAntigenName evidence="28">CD10</cdAntigenName>
</protein>
<gene>
    <name evidence="30 33" type="primary">MME</name>
    <name type="synonym">EPN</name>
</gene>
<evidence type="ECO:0000250" key="1">
    <source>
        <dbReference type="UniProtKB" id="P07861"/>
    </source>
</evidence>
<evidence type="ECO:0000255" key="2"/>
<evidence type="ECO:0000255" key="3">
    <source>
        <dbReference type="PROSITE-ProRule" id="PRU01233"/>
    </source>
</evidence>
<evidence type="ECO:0000255" key="4">
    <source>
        <dbReference type="PROSITE-ProRule" id="PRU10095"/>
    </source>
</evidence>
<evidence type="ECO:0000256" key="5">
    <source>
        <dbReference type="SAM" id="MobiDB-lite"/>
    </source>
</evidence>
<evidence type="ECO:0000269" key="6">
    <source>
    </source>
</evidence>
<evidence type="ECO:0000269" key="7">
    <source>
    </source>
</evidence>
<evidence type="ECO:0000269" key="8">
    <source>
    </source>
</evidence>
<evidence type="ECO:0000269" key="9">
    <source>
    </source>
</evidence>
<evidence type="ECO:0000269" key="10">
    <source>
    </source>
</evidence>
<evidence type="ECO:0000269" key="11">
    <source>
    </source>
</evidence>
<evidence type="ECO:0000269" key="12">
    <source>
    </source>
</evidence>
<evidence type="ECO:0000269" key="13">
    <source>
    </source>
</evidence>
<evidence type="ECO:0000269" key="14">
    <source>
    </source>
</evidence>
<evidence type="ECO:0000269" key="15">
    <source>
    </source>
</evidence>
<evidence type="ECO:0000269" key="16">
    <source>
    </source>
</evidence>
<evidence type="ECO:0000269" key="17">
    <source>
    </source>
</evidence>
<evidence type="ECO:0000269" key="18">
    <source>
    </source>
</evidence>
<evidence type="ECO:0000269" key="19">
    <source>
    </source>
</evidence>
<evidence type="ECO:0000269" key="20">
    <source>
    </source>
</evidence>
<evidence type="ECO:0000269" key="21">
    <source>
    </source>
</evidence>
<evidence type="ECO:0000269" key="22">
    <source>
    </source>
</evidence>
<evidence type="ECO:0000269" key="23">
    <source>
    </source>
</evidence>
<evidence type="ECO:0000269" key="24">
    <source>
    </source>
</evidence>
<evidence type="ECO:0000269" key="25">
    <source>
    </source>
</evidence>
<evidence type="ECO:0000269" key="26">
    <source>
    </source>
</evidence>
<evidence type="ECO:0000303" key="27">
    <source>
    </source>
</evidence>
<evidence type="ECO:0000303" key="28">
    <source>
    </source>
</evidence>
<evidence type="ECO:0000303" key="29">
    <source>
    </source>
</evidence>
<evidence type="ECO:0000303" key="30">
    <source>
    </source>
</evidence>
<evidence type="ECO:0000303" key="31">
    <source>
    </source>
</evidence>
<evidence type="ECO:0000305" key="32"/>
<evidence type="ECO:0000312" key="33">
    <source>
        <dbReference type="HGNC" id="HGNC:7154"/>
    </source>
</evidence>
<evidence type="ECO:0007744" key="34">
    <source>
    </source>
</evidence>
<evidence type="ECO:0007829" key="35">
    <source>
        <dbReference type="PDB" id="1R1H"/>
    </source>
</evidence>
<evidence type="ECO:0007829" key="36">
    <source>
        <dbReference type="PDB" id="2YB9"/>
    </source>
</evidence>
<evidence type="ECO:0007829" key="37">
    <source>
        <dbReference type="PDB" id="6GID"/>
    </source>
</evidence>
<evidence type="ECO:0007829" key="38">
    <source>
        <dbReference type="PDB" id="6SUK"/>
    </source>
</evidence>
<keyword id="KW-0002">3D-structure</keyword>
<keyword id="KW-1003">Cell membrane</keyword>
<keyword id="KW-0144">Charcot-Marie-Tooth disease</keyword>
<keyword id="KW-0225">Disease variant</keyword>
<keyword id="KW-1015">Disulfide bond</keyword>
<keyword id="KW-0325">Glycoprotein</keyword>
<keyword id="KW-0378">Hydrolase</keyword>
<keyword id="KW-0449">Lipoprotein</keyword>
<keyword id="KW-0472">Membrane</keyword>
<keyword id="KW-0479">Metal-binding</keyword>
<keyword id="KW-0482">Metalloprotease</keyword>
<keyword id="KW-0519">Myristate</keyword>
<keyword id="KW-0523">Neurodegeneration</keyword>
<keyword id="KW-0622">Neuropathy</keyword>
<keyword id="KW-0597">Phosphoprotein</keyword>
<keyword id="KW-0645">Protease</keyword>
<keyword id="KW-1267">Proteomics identification</keyword>
<keyword id="KW-1185">Reference proteome</keyword>
<keyword id="KW-0735">Signal-anchor</keyword>
<keyword id="KW-0950">Spinocerebellar ataxia</keyword>
<keyword id="KW-0812">Transmembrane</keyword>
<keyword id="KW-1133">Transmembrane helix</keyword>
<keyword id="KW-0862">Zinc</keyword>
<sequence length="750" mass="85514">MGKSESQMDITDINTPKPKKKQRWTPLEISLSVLVLLLTIIAVTMIALYATYDDGICKSSDCIKSAARLIQNMDATTEPCTDFFKYACGGWLKRNVIPETSSRYGNFDILRDELEVVLKDVLQEPKTEDIVAVQKAKALYRSCINESAIDSRGGEPLLKLLPDIYGWPVATENWEQKYGASWTAEKAIAQLNSKYGKKVLINLFVGTDDKNSVNHVIHIDQPRLGLPSRDYYECTGIYKEACTAYVDFMISVARLIRQEERLPIDENQLALEMNKVMELEKEIANATAKPEDRNDPMLLYNKMTLAQIQNNFSLEINGKPFSWLNFTNEIMSTVNISITNEEDVVVYAPEYLTKLKPILTKYSARDLQNLMSWRFIMDLVSSLSRTYKESRNAFRKALYGTTSETATWRRCANYVNGNMENAVGRLYVEAAFAGESKHVVEDLIAQIREVFIQTLDDLTWMDAETKKRAEEKALAIKERIGYPDDIVSNDNKLNNEYLELNYKEDEYFENIIQNLKFSQSKQLKKLREKVDKDEWISGAAVVNAFYSSGRNQIVFPAGILQPPFFSAQQSNSLNYGGIGMVIGHEITHGFDDNGRNFNKDGDLVDWWTQQSASNFKEQSQCMVYQYGNFSWDLAGGQHLNGINTLGENIADNGGLGQAYRAYQNYIKKNGEEKLLPGLDLNHKQLFFLNFAQVWCGTYRPEYAVNSIKTDVHSPGNFRIIGTLQNSAEFSEAFHCRKNSYMNPEKKCRVW</sequence>
<organism>
    <name type="scientific">Homo sapiens</name>
    <name type="common">Human</name>
    <dbReference type="NCBI Taxonomy" id="9606"/>
    <lineage>
        <taxon>Eukaryota</taxon>
        <taxon>Metazoa</taxon>
        <taxon>Chordata</taxon>
        <taxon>Craniata</taxon>
        <taxon>Vertebrata</taxon>
        <taxon>Euteleostomi</taxon>
        <taxon>Mammalia</taxon>
        <taxon>Eutheria</taxon>
        <taxon>Euarchontoglires</taxon>
        <taxon>Primates</taxon>
        <taxon>Haplorrhini</taxon>
        <taxon>Catarrhini</taxon>
        <taxon>Hominidae</taxon>
        <taxon>Homo</taxon>
    </lineage>
</organism>
<dbReference type="EC" id="3.4.24.11" evidence="9 20 24 25 26"/>
<dbReference type="EMBL" id="Y00811">
    <property type="protein sequence ID" value="CAA68752.1"/>
    <property type="molecule type" value="mRNA"/>
</dbReference>
<dbReference type="EMBL" id="J03779">
    <property type="protein sequence ID" value="AAA51915.1"/>
    <property type="molecule type" value="mRNA"/>
</dbReference>
<dbReference type="EMBL" id="M26628">
    <property type="protein sequence ID" value="AAA52294.1"/>
    <property type="molecule type" value="Genomic_DNA"/>
</dbReference>
<dbReference type="EMBL" id="M26607">
    <property type="protein sequence ID" value="AAA52294.1"/>
    <property type="status" value="JOINED"/>
    <property type="molecule type" value="Genomic_DNA"/>
</dbReference>
<dbReference type="EMBL" id="M26608">
    <property type="protein sequence ID" value="AAA52294.1"/>
    <property type="status" value="JOINED"/>
    <property type="molecule type" value="Genomic_DNA"/>
</dbReference>
<dbReference type="EMBL" id="M26609">
    <property type="protein sequence ID" value="AAA52294.1"/>
    <property type="status" value="JOINED"/>
    <property type="molecule type" value="Genomic_DNA"/>
</dbReference>
<dbReference type="EMBL" id="M26610">
    <property type="protein sequence ID" value="AAA52294.1"/>
    <property type="status" value="JOINED"/>
    <property type="molecule type" value="Genomic_DNA"/>
</dbReference>
<dbReference type="EMBL" id="M26611">
    <property type="protein sequence ID" value="AAA52294.1"/>
    <property type="status" value="JOINED"/>
    <property type="molecule type" value="Genomic_DNA"/>
</dbReference>
<dbReference type="EMBL" id="M26612">
    <property type="protein sequence ID" value="AAA52294.1"/>
    <property type="status" value="JOINED"/>
    <property type="molecule type" value="Genomic_DNA"/>
</dbReference>
<dbReference type="EMBL" id="M26613">
    <property type="protein sequence ID" value="AAA52294.1"/>
    <property type="status" value="JOINED"/>
    <property type="molecule type" value="Genomic_DNA"/>
</dbReference>
<dbReference type="EMBL" id="M26614">
    <property type="protein sequence ID" value="AAA52294.1"/>
    <property type="status" value="JOINED"/>
    <property type="molecule type" value="Genomic_DNA"/>
</dbReference>
<dbReference type="EMBL" id="M26615">
    <property type="protein sequence ID" value="AAA52294.1"/>
    <property type="status" value="JOINED"/>
    <property type="molecule type" value="Genomic_DNA"/>
</dbReference>
<dbReference type="EMBL" id="M26616">
    <property type="protein sequence ID" value="AAA52294.1"/>
    <property type="status" value="JOINED"/>
    <property type="molecule type" value="Genomic_DNA"/>
</dbReference>
<dbReference type="EMBL" id="M26617">
    <property type="protein sequence ID" value="AAA52294.1"/>
    <property type="status" value="JOINED"/>
    <property type="molecule type" value="Genomic_DNA"/>
</dbReference>
<dbReference type="EMBL" id="M26618">
    <property type="protein sequence ID" value="AAA52294.1"/>
    <property type="status" value="JOINED"/>
    <property type="molecule type" value="Genomic_DNA"/>
</dbReference>
<dbReference type="EMBL" id="M26619">
    <property type="protein sequence ID" value="AAA52294.1"/>
    <property type="status" value="JOINED"/>
    <property type="molecule type" value="Genomic_DNA"/>
</dbReference>
<dbReference type="EMBL" id="M26620">
    <property type="protein sequence ID" value="AAA52294.1"/>
    <property type="status" value="JOINED"/>
    <property type="molecule type" value="Genomic_DNA"/>
</dbReference>
<dbReference type="EMBL" id="M26621">
    <property type="protein sequence ID" value="AAA52294.1"/>
    <property type="status" value="JOINED"/>
    <property type="molecule type" value="Genomic_DNA"/>
</dbReference>
<dbReference type="EMBL" id="M26622">
    <property type="protein sequence ID" value="AAA52294.1"/>
    <property type="status" value="JOINED"/>
    <property type="molecule type" value="Genomic_DNA"/>
</dbReference>
<dbReference type="EMBL" id="M26623">
    <property type="protein sequence ID" value="AAA52294.1"/>
    <property type="status" value="JOINED"/>
    <property type="molecule type" value="Genomic_DNA"/>
</dbReference>
<dbReference type="EMBL" id="M26624">
    <property type="protein sequence ID" value="AAA52294.1"/>
    <property type="status" value="JOINED"/>
    <property type="molecule type" value="Genomic_DNA"/>
</dbReference>
<dbReference type="EMBL" id="M26625">
    <property type="protein sequence ID" value="AAA52294.1"/>
    <property type="status" value="JOINED"/>
    <property type="molecule type" value="Genomic_DNA"/>
</dbReference>
<dbReference type="EMBL" id="M26626">
    <property type="protein sequence ID" value="AAA52294.1"/>
    <property type="status" value="JOINED"/>
    <property type="molecule type" value="Genomic_DNA"/>
</dbReference>
<dbReference type="EMBL" id="M26627">
    <property type="protein sequence ID" value="AAA52294.1"/>
    <property type="status" value="JOINED"/>
    <property type="molecule type" value="Genomic_DNA"/>
</dbReference>
<dbReference type="EMBL" id="AK291761">
    <property type="protein sequence ID" value="BAF84450.1"/>
    <property type="molecule type" value="mRNA"/>
</dbReference>
<dbReference type="EMBL" id="EU326307">
    <property type="protein sequence ID" value="ACA05913.1"/>
    <property type="molecule type" value="Genomic_DNA"/>
</dbReference>
<dbReference type="EMBL" id="CH471052">
    <property type="protein sequence ID" value="EAW78754.1"/>
    <property type="molecule type" value="Genomic_DNA"/>
</dbReference>
<dbReference type="EMBL" id="CH471052">
    <property type="protein sequence ID" value="EAW78755.1"/>
    <property type="molecule type" value="Genomic_DNA"/>
</dbReference>
<dbReference type="EMBL" id="CH471052">
    <property type="protein sequence ID" value="EAW78756.1"/>
    <property type="molecule type" value="Genomic_DNA"/>
</dbReference>
<dbReference type="EMBL" id="CH471052">
    <property type="protein sequence ID" value="EAW78757.1"/>
    <property type="molecule type" value="Genomic_DNA"/>
</dbReference>
<dbReference type="EMBL" id="CH471052">
    <property type="protein sequence ID" value="EAW78758.1"/>
    <property type="molecule type" value="Genomic_DNA"/>
</dbReference>
<dbReference type="EMBL" id="BC101632">
    <property type="protein sequence ID" value="AAI01633.1"/>
    <property type="molecule type" value="mRNA"/>
</dbReference>
<dbReference type="EMBL" id="BC101658">
    <property type="protein sequence ID" value="AAI01659.1"/>
    <property type="molecule type" value="mRNA"/>
</dbReference>
<dbReference type="EMBL" id="X07166">
    <property type="protein sequence ID" value="CAA30157.1"/>
    <property type="status" value="ALT_INIT"/>
    <property type="molecule type" value="mRNA"/>
</dbReference>
<dbReference type="CCDS" id="CCDS3172.1"/>
<dbReference type="PIR" id="A41387">
    <property type="entry name" value="HYHUN"/>
</dbReference>
<dbReference type="RefSeq" id="NP_000893.2">
    <property type="nucleotide sequence ID" value="NM_000902.5"/>
</dbReference>
<dbReference type="RefSeq" id="NP_001341571.1">
    <property type="nucleotide sequence ID" value="NM_001354642.2"/>
</dbReference>
<dbReference type="RefSeq" id="NP_001341572.1">
    <property type="nucleotide sequence ID" value="NM_001354643.1"/>
</dbReference>
<dbReference type="RefSeq" id="NP_009218.2">
    <property type="nucleotide sequence ID" value="NM_007287.4"/>
</dbReference>
<dbReference type="RefSeq" id="NP_009219.2">
    <property type="nucleotide sequence ID" value="NM_007288.3"/>
</dbReference>
<dbReference type="RefSeq" id="NP_009220.2">
    <property type="nucleotide sequence ID" value="NM_007289.4"/>
</dbReference>
<dbReference type="RefSeq" id="XP_006713709.1">
    <property type="nucleotide sequence ID" value="XM_006713646.3"/>
</dbReference>
<dbReference type="RefSeq" id="XP_006713710.1">
    <property type="nucleotide sequence ID" value="XM_006713647.5"/>
</dbReference>
<dbReference type="RefSeq" id="XP_011511157.1">
    <property type="nucleotide sequence ID" value="XM_011512855.2"/>
</dbReference>
<dbReference type="RefSeq" id="XP_011511158.1">
    <property type="nucleotide sequence ID" value="XM_011512856.3"/>
</dbReference>
<dbReference type="RefSeq" id="XP_011511159.1">
    <property type="nucleotide sequence ID" value="XM_011512857.3"/>
</dbReference>
<dbReference type="RefSeq" id="XP_047304113.1">
    <property type="nucleotide sequence ID" value="XM_047448157.1"/>
</dbReference>
<dbReference type="RefSeq" id="XP_054202544.1">
    <property type="nucleotide sequence ID" value="XM_054346569.1"/>
</dbReference>
<dbReference type="RefSeq" id="XP_054202545.1">
    <property type="nucleotide sequence ID" value="XM_054346570.1"/>
</dbReference>
<dbReference type="RefSeq" id="XP_054202546.1">
    <property type="nucleotide sequence ID" value="XM_054346571.1"/>
</dbReference>
<dbReference type="RefSeq" id="XP_054202547.1">
    <property type="nucleotide sequence ID" value="XM_054346572.1"/>
</dbReference>
<dbReference type="PDB" id="1DMT">
    <property type="method" value="X-ray"/>
    <property type="resolution" value="2.10 A"/>
    <property type="chains" value="A=55-750"/>
</dbReference>
<dbReference type="PDB" id="1R1H">
    <property type="method" value="X-ray"/>
    <property type="resolution" value="1.95 A"/>
    <property type="chains" value="A=55-750"/>
</dbReference>
<dbReference type="PDB" id="1R1I">
    <property type="method" value="X-ray"/>
    <property type="resolution" value="2.60 A"/>
    <property type="chains" value="A=55-750"/>
</dbReference>
<dbReference type="PDB" id="1R1J">
    <property type="method" value="X-ray"/>
    <property type="resolution" value="2.35 A"/>
    <property type="chains" value="A=55-750"/>
</dbReference>
<dbReference type="PDB" id="1Y8J">
    <property type="method" value="X-ray"/>
    <property type="resolution" value="2.25 A"/>
    <property type="chains" value="A=55-750"/>
</dbReference>
<dbReference type="PDB" id="2QPJ">
    <property type="method" value="X-ray"/>
    <property type="resolution" value="2.05 A"/>
    <property type="chains" value="A=55-750"/>
</dbReference>
<dbReference type="PDB" id="2YB9">
    <property type="method" value="X-ray"/>
    <property type="resolution" value="2.40 A"/>
    <property type="chains" value="A=55-750"/>
</dbReference>
<dbReference type="PDB" id="4CTH">
    <property type="method" value="X-ray"/>
    <property type="resolution" value="2.15 A"/>
    <property type="chains" value="A=52-750"/>
</dbReference>
<dbReference type="PDB" id="5JMY">
    <property type="method" value="X-ray"/>
    <property type="resolution" value="2.00 A"/>
    <property type="chains" value="A/B=53-750"/>
</dbReference>
<dbReference type="PDB" id="6GID">
    <property type="method" value="X-ray"/>
    <property type="resolution" value="1.90 A"/>
    <property type="chains" value="A=55-750"/>
</dbReference>
<dbReference type="PDB" id="6SH1">
    <property type="method" value="X-ray"/>
    <property type="resolution" value="2.10 A"/>
    <property type="chains" value="AAA/CCC=55-750"/>
</dbReference>
<dbReference type="PDB" id="6SH2">
    <property type="method" value="X-ray"/>
    <property type="resolution" value="2.60 A"/>
    <property type="chains" value="AAA=55-750"/>
</dbReference>
<dbReference type="PDB" id="6SUK">
    <property type="method" value="X-ray"/>
    <property type="resolution" value="1.75 A"/>
    <property type="chains" value="A=52-750"/>
</dbReference>
<dbReference type="PDB" id="6SVY">
    <property type="method" value="X-ray"/>
    <property type="resolution" value="2.60 A"/>
    <property type="chains" value="A=52-750"/>
</dbReference>
<dbReference type="PDB" id="6THP">
    <property type="method" value="X-ray"/>
    <property type="resolution" value="2.54 A"/>
    <property type="chains" value="A/B=55-750"/>
</dbReference>
<dbReference type="PDB" id="6XVP">
    <property type="method" value="X-ray"/>
    <property type="resolution" value="2.65 A"/>
    <property type="chains" value="A=52-750"/>
</dbReference>
<dbReference type="PDBsum" id="1DMT"/>
<dbReference type="PDBsum" id="1R1H"/>
<dbReference type="PDBsum" id="1R1I"/>
<dbReference type="PDBsum" id="1R1J"/>
<dbReference type="PDBsum" id="1Y8J"/>
<dbReference type="PDBsum" id="2QPJ"/>
<dbReference type="PDBsum" id="2YB9"/>
<dbReference type="PDBsum" id="4CTH"/>
<dbReference type="PDBsum" id="5JMY"/>
<dbReference type="PDBsum" id="6GID"/>
<dbReference type="PDBsum" id="6SH1"/>
<dbReference type="PDBsum" id="6SH2"/>
<dbReference type="PDBsum" id="6SUK"/>
<dbReference type="PDBsum" id="6SVY"/>
<dbReference type="PDBsum" id="6THP"/>
<dbReference type="PDBsum" id="6XVP"/>
<dbReference type="SASBDB" id="P08473"/>
<dbReference type="SMR" id="P08473"/>
<dbReference type="BioGRID" id="110455">
    <property type="interactions" value="148"/>
</dbReference>
<dbReference type="FunCoup" id="P08473">
    <property type="interactions" value="563"/>
</dbReference>
<dbReference type="IntAct" id="P08473">
    <property type="interactions" value="110"/>
</dbReference>
<dbReference type="MINT" id="P08473"/>
<dbReference type="STRING" id="9606.ENSP00000418525"/>
<dbReference type="BindingDB" id="P08473"/>
<dbReference type="ChEMBL" id="CHEMBL1944"/>
<dbReference type="DrugBank" id="DB08575">
    <property type="generic name" value="2-[(1S)-1-BENZYL-2-SULFANYLETHYL]-1H-IMIDAZO[4,5-C]PYRIDIN-5-IUM"/>
</dbReference>
<dbReference type="DrugBank" id="DB02597">
    <property type="generic name" value="[2(R,S)-2-Sulfanylheptanoyl]-Phe-Ala"/>
</dbReference>
<dbReference type="DrugBank" id="DB00616">
    <property type="generic name" value="Candoxatril"/>
</dbReference>
<dbReference type="DrugBank" id="DB11623">
    <property type="generic name" value="Candoxatrilat"/>
</dbReference>
<dbReference type="DrugBank" id="DB05796">
    <property type="generic name" value="Daglutril"/>
</dbReference>
<dbReference type="DrugBank" id="DB12923">
    <property type="generic name" value="Gallopamil"/>
</dbReference>
<dbReference type="DrugBank" id="DB06604">
    <property type="generic name" value="Ilepatril"/>
</dbReference>
<dbReference type="DrugBank" id="DB06655">
    <property type="generic name" value="Liraglutide"/>
</dbReference>
<dbReference type="DrugBank" id="DB02558">
    <property type="generic name" value="N-(3-Phenyl-2-Sulfanylpropanoyl)Phenylalanylalanine"/>
</dbReference>
<dbReference type="DrugBank" id="DB02062">
    <property type="generic name" value="N-[3-[(1-Aminoethyl)(Hydroxy)Phosphoryl]-2-(1,1'-Biphenyl-4-Ylmethyl)Propanoyl]Alanine"/>
</dbReference>
<dbReference type="DrugBank" id="DB00886">
    <property type="generic name" value="Omapatrilat"/>
</dbReference>
<dbReference type="DrugBank" id="DB02557">
    <property type="generic name" value="Phosphoramidon"/>
</dbReference>
<dbReference type="DrugBank" id="DB09292">
    <property type="generic name" value="Sacubitril"/>
</dbReference>
<dbReference type="DrugBank" id="DB14127">
    <property type="generic name" value="Sacubitrilat"/>
</dbReference>
<dbReference type="DrugBank" id="DB13928">
    <property type="generic name" value="Semaglutide"/>
</dbReference>
<dbReference type="DrugBank" id="DB15356">
    <property type="generic name" value="SLV-334"/>
</dbReference>
<dbReference type="DrugBank" id="DB08626">
    <property type="generic name" value="Thiorphan"/>
</dbReference>
<dbReference type="DrugCentral" id="P08473"/>
<dbReference type="GuidetoPHARMACOLOGY" id="1611"/>
<dbReference type="MEROPS" id="M13.001"/>
<dbReference type="CarbonylDB" id="P08473"/>
<dbReference type="GlyConnect" id="1541">
    <property type="glycosylation" value="1 N-Linked glycan (1 site)"/>
</dbReference>
<dbReference type="GlyCosmos" id="P08473">
    <property type="glycosylation" value="4 sites, 1 glycan"/>
</dbReference>
<dbReference type="GlyGen" id="P08473">
    <property type="glycosylation" value="8 sites, 93 N-linked glycans (2 sites)"/>
</dbReference>
<dbReference type="iPTMnet" id="P08473"/>
<dbReference type="PhosphoSitePlus" id="P08473"/>
<dbReference type="SwissPalm" id="P08473"/>
<dbReference type="BioMuta" id="MME"/>
<dbReference type="DMDM" id="128062"/>
<dbReference type="jPOST" id="P08473"/>
<dbReference type="MassIVE" id="P08473"/>
<dbReference type="PaxDb" id="9606-ENSP00000418525"/>
<dbReference type="PeptideAtlas" id="P08473"/>
<dbReference type="ProteomicsDB" id="52110"/>
<dbReference type="Antibodypedia" id="3658">
    <property type="antibodies" value="2649 antibodies from 55 providers"/>
</dbReference>
<dbReference type="DNASU" id="4311"/>
<dbReference type="Ensembl" id="ENST00000360490.7">
    <property type="protein sequence ID" value="ENSP00000353679.2"/>
    <property type="gene ID" value="ENSG00000196549.13"/>
</dbReference>
<dbReference type="Ensembl" id="ENST00000460393.6">
    <property type="protein sequence ID" value="ENSP00000418525.1"/>
    <property type="gene ID" value="ENSG00000196549.13"/>
</dbReference>
<dbReference type="Ensembl" id="ENST00000462745.5">
    <property type="protein sequence ID" value="ENSP00000419653.1"/>
    <property type="gene ID" value="ENSG00000196549.13"/>
</dbReference>
<dbReference type="Ensembl" id="ENST00000473730.6">
    <property type="protein sequence ID" value="ENSP00000420542.2"/>
    <property type="gene ID" value="ENSG00000196549.13"/>
</dbReference>
<dbReference type="Ensembl" id="ENST00000491026.6">
    <property type="protein sequence ID" value="ENSP00000418791.2"/>
    <property type="gene ID" value="ENSG00000196549.13"/>
</dbReference>
<dbReference type="Ensembl" id="ENST00000492661.5">
    <property type="protein sequence ID" value="ENSP00000420389.1"/>
    <property type="gene ID" value="ENSG00000196549.13"/>
</dbReference>
<dbReference type="Ensembl" id="ENST00000493237.5">
    <property type="protein sequence ID" value="ENSP00000417079.1"/>
    <property type="gene ID" value="ENSG00000196549.13"/>
</dbReference>
<dbReference type="Ensembl" id="ENST00000675418.2">
    <property type="protein sequence ID" value="ENSP00000502021.2"/>
    <property type="gene ID" value="ENSG00000196549.13"/>
</dbReference>
<dbReference type="Ensembl" id="ENST00000680057.1">
    <property type="protein sequence ID" value="ENSP00000505211.1"/>
    <property type="gene ID" value="ENSG00000196549.13"/>
</dbReference>
<dbReference type="Ensembl" id="ENST00000680282.1">
    <property type="protein sequence ID" value="ENSP00000505690.1"/>
    <property type="gene ID" value="ENSG00000196549.13"/>
</dbReference>
<dbReference type="GeneID" id="4311"/>
<dbReference type="KEGG" id="hsa:4311"/>
<dbReference type="MANE-Select" id="ENST00000360490.7">
    <property type="protein sequence ID" value="ENSP00000353679.2"/>
    <property type="RefSeq nucleotide sequence ID" value="NM_007289.4"/>
    <property type="RefSeq protein sequence ID" value="NP_009220.2"/>
</dbReference>
<dbReference type="UCSC" id="uc003fab.2">
    <property type="organism name" value="human"/>
</dbReference>
<dbReference type="AGR" id="HGNC:7154"/>
<dbReference type="CTD" id="4311"/>
<dbReference type="DisGeNET" id="4311"/>
<dbReference type="GeneCards" id="MME"/>
<dbReference type="GeneReviews" id="MME"/>
<dbReference type="HGNC" id="HGNC:7154">
    <property type="gene designation" value="MME"/>
</dbReference>
<dbReference type="HPA" id="ENSG00000196549">
    <property type="expression patterns" value="Tissue enhanced (intestine, kidney)"/>
</dbReference>
<dbReference type="MalaCards" id="MME"/>
<dbReference type="MIM" id="120520">
    <property type="type" value="gene"/>
</dbReference>
<dbReference type="MIM" id="617017">
    <property type="type" value="phenotype"/>
</dbReference>
<dbReference type="MIM" id="617018">
    <property type="type" value="phenotype"/>
</dbReference>
<dbReference type="neXtProt" id="NX_P08473"/>
<dbReference type="NIAGADS" id="ENSG00000196549"/>
<dbReference type="OpenTargets" id="ENSG00000196549"/>
<dbReference type="Orphanet" id="495274">
    <property type="disease" value="Charcot-Marie-Tooth disease type 2T"/>
</dbReference>
<dbReference type="Orphanet" id="69063">
    <property type="disease" value="Congenital membranous nephropathy due to fetomaternal anti-neutral endopeptidase alloimmunization"/>
</dbReference>
<dbReference type="Orphanet" id="497757">
    <property type="disease" value="MME-related autosomal dominant Charcot Marie Tooth disease type 2"/>
</dbReference>
<dbReference type="Orphanet" id="497764">
    <property type="disease" value="Spinocerebellar ataxia type 43"/>
</dbReference>
<dbReference type="PharmGKB" id="PA30864"/>
<dbReference type="VEuPathDB" id="HostDB:ENSG00000196549"/>
<dbReference type="eggNOG" id="KOG3624">
    <property type="taxonomic scope" value="Eukaryota"/>
</dbReference>
<dbReference type="GeneTree" id="ENSGT00940000156745"/>
<dbReference type="HOGENOM" id="CLU_006187_8_0_1"/>
<dbReference type="InParanoid" id="P08473"/>
<dbReference type="OMA" id="RNHDAWY"/>
<dbReference type="OrthoDB" id="6475849at2759"/>
<dbReference type="PAN-GO" id="P08473">
    <property type="GO annotations" value="4 GO annotations based on evolutionary models"/>
</dbReference>
<dbReference type="PhylomeDB" id="P08473"/>
<dbReference type="TreeFam" id="TF315192"/>
<dbReference type="BRENDA" id="3.4.24.11">
    <property type="organism ID" value="2681"/>
</dbReference>
<dbReference type="PathwayCommons" id="P08473"/>
<dbReference type="Reactome" id="R-HSA-2022377">
    <property type="pathway name" value="Metabolism of Angiotensinogen to Angiotensins"/>
</dbReference>
<dbReference type="Reactome" id="R-HSA-5578768">
    <property type="pathway name" value="Physiological factors"/>
</dbReference>
<dbReference type="Reactome" id="R-HSA-6798695">
    <property type="pathway name" value="Neutrophil degranulation"/>
</dbReference>
<dbReference type="SignaLink" id="P08473"/>
<dbReference type="SIGNOR" id="P08473"/>
<dbReference type="BioGRID-ORCS" id="4311">
    <property type="hits" value="9 hits in 1166 CRISPR screens"/>
</dbReference>
<dbReference type="ChiTaRS" id="MME">
    <property type="organism name" value="human"/>
</dbReference>
<dbReference type="EvolutionaryTrace" id="P08473"/>
<dbReference type="GeneWiki" id="Neprilysin"/>
<dbReference type="GenomeRNAi" id="4311"/>
<dbReference type="Pharos" id="P08473">
    <property type="development level" value="Tclin"/>
</dbReference>
<dbReference type="PRO" id="PR:P08473"/>
<dbReference type="Proteomes" id="UP000005640">
    <property type="component" value="Chromosome 3"/>
</dbReference>
<dbReference type="RNAct" id="P08473">
    <property type="molecule type" value="protein"/>
</dbReference>
<dbReference type="Bgee" id="ENSG00000196549">
    <property type="expression patterns" value="Expressed in jejunal mucosa and 146 other cell types or tissues"/>
</dbReference>
<dbReference type="ExpressionAtlas" id="P08473">
    <property type="expression patterns" value="baseline and differential"/>
</dbReference>
<dbReference type="GO" id="GO:0030424">
    <property type="term" value="C:axon"/>
    <property type="evidence" value="ECO:0000316"/>
    <property type="project" value="ARUK-UCL"/>
</dbReference>
<dbReference type="GO" id="GO:0005903">
    <property type="term" value="C:brush border"/>
    <property type="evidence" value="ECO:0000314"/>
    <property type="project" value="UniProtKB"/>
</dbReference>
<dbReference type="GO" id="GO:0009986">
    <property type="term" value="C:cell surface"/>
    <property type="evidence" value="ECO:0000303"/>
    <property type="project" value="ARUK-UCL"/>
</dbReference>
<dbReference type="GO" id="GO:0005813">
    <property type="term" value="C:centrosome"/>
    <property type="evidence" value="ECO:0000314"/>
    <property type="project" value="HPA"/>
</dbReference>
<dbReference type="GO" id="GO:0036064">
    <property type="term" value="C:ciliary basal body"/>
    <property type="evidence" value="ECO:0000314"/>
    <property type="project" value="HPA"/>
</dbReference>
<dbReference type="GO" id="GO:0005737">
    <property type="term" value="C:cytoplasm"/>
    <property type="evidence" value="ECO:0000314"/>
    <property type="project" value="UniProtKB"/>
</dbReference>
<dbReference type="GO" id="GO:0031410">
    <property type="term" value="C:cytoplasmic vesicle"/>
    <property type="evidence" value="ECO:0000314"/>
    <property type="project" value="ARUK-UCL"/>
</dbReference>
<dbReference type="GO" id="GO:0005829">
    <property type="term" value="C:cytosol"/>
    <property type="evidence" value="ECO:0000314"/>
    <property type="project" value="HPA"/>
</dbReference>
<dbReference type="GO" id="GO:0030425">
    <property type="term" value="C:dendrite"/>
    <property type="evidence" value="ECO:0000250"/>
    <property type="project" value="UniProtKB"/>
</dbReference>
<dbReference type="GO" id="GO:0005769">
    <property type="term" value="C:early endosome"/>
    <property type="evidence" value="ECO:0000314"/>
    <property type="project" value="ARUK-UCL"/>
</dbReference>
<dbReference type="GO" id="GO:0070062">
    <property type="term" value="C:extracellular exosome"/>
    <property type="evidence" value="ECO:0007005"/>
    <property type="project" value="UniProtKB"/>
</dbReference>
<dbReference type="GO" id="GO:0005925">
    <property type="term" value="C:focal adhesion"/>
    <property type="evidence" value="ECO:0007005"/>
    <property type="project" value="UniProtKB"/>
</dbReference>
<dbReference type="GO" id="GO:0016020">
    <property type="term" value="C:membrane"/>
    <property type="evidence" value="ECO:0000303"/>
    <property type="project" value="UniProtKB"/>
</dbReference>
<dbReference type="GO" id="GO:0045121">
    <property type="term" value="C:membrane raft"/>
    <property type="evidence" value="ECO:0000314"/>
    <property type="project" value="ARUK-UCL"/>
</dbReference>
<dbReference type="GO" id="GO:0044306">
    <property type="term" value="C:neuron projection terminus"/>
    <property type="evidence" value="ECO:0000250"/>
    <property type="project" value="UniProtKB"/>
</dbReference>
<dbReference type="GO" id="GO:0043025">
    <property type="term" value="C:neuronal cell body"/>
    <property type="evidence" value="ECO:0000314"/>
    <property type="project" value="ARUK-UCL"/>
</dbReference>
<dbReference type="GO" id="GO:0005654">
    <property type="term" value="C:nucleoplasm"/>
    <property type="evidence" value="ECO:0000314"/>
    <property type="project" value="HPA"/>
</dbReference>
<dbReference type="GO" id="GO:0005886">
    <property type="term" value="C:plasma membrane"/>
    <property type="evidence" value="ECO:0000314"/>
    <property type="project" value="UniProtKB"/>
</dbReference>
<dbReference type="GO" id="GO:0098793">
    <property type="term" value="C:presynapse"/>
    <property type="evidence" value="ECO:0000316"/>
    <property type="project" value="ARUK-UCL"/>
</dbReference>
<dbReference type="GO" id="GO:0030667">
    <property type="term" value="C:secretory granule membrane"/>
    <property type="evidence" value="ECO:0000304"/>
    <property type="project" value="Reactome"/>
</dbReference>
<dbReference type="GO" id="GO:0045202">
    <property type="term" value="C:synapse"/>
    <property type="evidence" value="ECO:0000250"/>
    <property type="project" value="UniProtKB"/>
</dbReference>
<dbReference type="GO" id="GO:0008021">
    <property type="term" value="C:synaptic vesicle"/>
    <property type="evidence" value="ECO:0000250"/>
    <property type="project" value="UniProtKB"/>
</dbReference>
<dbReference type="GO" id="GO:0005802">
    <property type="term" value="C:trans-Golgi network"/>
    <property type="evidence" value="ECO:0000314"/>
    <property type="project" value="ARUK-UCL"/>
</dbReference>
<dbReference type="GO" id="GO:1901612">
    <property type="term" value="F:cardiolipin binding"/>
    <property type="evidence" value="ECO:0000314"/>
    <property type="project" value="ARUK-UCL"/>
</dbReference>
<dbReference type="GO" id="GO:0004175">
    <property type="term" value="F:endopeptidase activity"/>
    <property type="evidence" value="ECO:0000314"/>
    <property type="project" value="UniProtKB"/>
</dbReference>
<dbReference type="GO" id="GO:0008238">
    <property type="term" value="F:exopeptidase activity"/>
    <property type="evidence" value="ECO:0000314"/>
    <property type="project" value="BHF-UCL"/>
</dbReference>
<dbReference type="GO" id="GO:0004181">
    <property type="term" value="F:metallocarboxypeptidase activity"/>
    <property type="evidence" value="ECO:0007669"/>
    <property type="project" value="Ensembl"/>
</dbReference>
<dbReference type="GO" id="GO:0004222">
    <property type="term" value="F:metalloendopeptidase activity"/>
    <property type="evidence" value="ECO:0000314"/>
    <property type="project" value="UniProtKB"/>
</dbReference>
<dbReference type="GO" id="GO:0070012">
    <property type="term" value="F:oligopeptidase activity"/>
    <property type="evidence" value="ECO:0007669"/>
    <property type="project" value="Ensembl"/>
</dbReference>
<dbReference type="GO" id="GO:0042277">
    <property type="term" value="F:peptide binding"/>
    <property type="evidence" value="ECO:0000250"/>
    <property type="project" value="UniProtKB"/>
</dbReference>
<dbReference type="GO" id="GO:0001786">
    <property type="term" value="F:phosphatidylserine binding"/>
    <property type="evidence" value="ECO:0000314"/>
    <property type="project" value="ARUK-UCL"/>
</dbReference>
<dbReference type="GO" id="GO:0042803">
    <property type="term" value="F:protein homodimerization activity"/>
    <property type="evidence" value="ECO:0000353"/>
    <property type="project" value="ARUK-UCL"/>
</dbReference>
<dbReference type="GO" id="GO:0008270">
    <property type="term" value="F:zinc ion binding"/>
    <property type="evidence" value="ECO:0000314"/>
    <property type="project" value="UniProtKB"/>
</dbReference>
<dbReference type="GO" id="GO:0097242">
    <property type="term" value="P:amyloid-beta clearance"/>
    <property type="evidence" value="ECO:0000314"/>
    <property type="project" value="ARUK-UCL"/>
</dbReference>
<dbReference type="GO" id="GO:0150094">
    <property type="term" value="P:amyloid-beta clearance by cellular catabolic process"/>
    <property type="evidence" value="ECO:0000314"/>
    <property type="project" value="ARUK-UCL"/>
</dbReference>
<dbReference type="GO" id="GO:0050435">
    <property type="term" value="P:amyloid-beta metabolic process"/>
    <property type="evidence" value="ECO:0000250"/>
    <property type="project" value="UniProtKB"/>
</dbReference>
<dbReference type="GO" id="GO:0002003">
    <property type="term" value="P:angiotensin maturation"/>
    <property type="evidence" value="ECO:0007669"/>
    <property type="project" value="Ensembl"/>
</dbReference>
<dbReference type="GO" id="GO:0010815">
    <property type="term" value="P:bradykinin catabolic process"/>
    <property type="evidence" value="ECO:0000314"/>
    <property type="project" value="UniProtKB"/>
</dbReference>
<dbReference type="GO" id="GO:0071345">
    <property type="term" value="P:cellular response to cytokine stimulus"/>
    <property type="evidence" value="ECO:0000314"/>
    <property type="project" value="UniProtKB"/>
</dbReference>
<dbReference type="GO" id="GO:0071492">
    <property type="term" value="P:cellular response to UV-A"/>
    <property type="evidence" value="ECO:0000314"/>
    <property type="project" value="UniProtKB"/>
</dbReference>
<dbReference type="GO" id="GO:0071493">
    <property type="term" value="P:cellular response to UV-B"/>
    <property type="evidence" value="ECO:0000314"/>
    <property type="project" value="UniProtKB"/>
</dbReference>
<dbReference type="GO" id="GO:0046449">
    <property type="term" value="P:creatinine metabolic process"/>
    <property type="evidence" value="ECO:0000315"/>
    <property type="project" value="UniProtKB"/>
</dbReference>
<dbReference type="GO" id="GO:0042447">
    <property type="term" value="P:hormone catabolic process"/>
    <property type="evidence" value="ECO:0000314"/>
    <property type="project" value="UniProtKB"/>
</dbReference>
<dbReference type="GO" id="GO:0001822">
    <property type="term" value="P:kidney development"/>
    <property type="evidence" value="ECO:0000270"/>
    <property type="project" value="UniProtKB"/>
</dbReference>
<dbReference type="GO" id="GO:0007611">
    <property type="term" value="P:learning or memory"/>
    <property type="evidence" value="ECO:0000316"/>
    <property type="project" value="ARUK-UCL"/>
</dbReference>
<dbReference type="GO" id="GO:0030324">
    <property type="term" value="P:lung development"/>
    <property type="evidence" value="ECO:0007669"/>
    <property type="project" value="Ensembl"/>
</dbReference>
<dbReference type="GO" id="GO:0061837">
    <property type="term" value="P:neuropeptide processing"/>
    <property type="evidence" value="ECO:0000316"/>
    <property type="project" value="ARUK-UCL"/>
</dbReference>
<dbReference type="GO" id="GO:0006518">
    <property type="term" value="P:peptide metabolic process"/>
    <property type="evidence" value="ECO:0000250"/>
    <property type="project" value="UniProtKB"/>
</dbReference>
<dbReference type="GO" id="GO:0001890">
    <property type="term" value="P:placenta development"/>
    <property type="evidence" value="ECO:0007669"/>
    <property type="project" value="Ensembl"/>
</dbReference>
<dbReference type="GO" id="GO:1900273">
    <property type="term" value="P:positive regulation of long-term synaptic potentiation"/>
    <property type="evidence" value="ECO:0007669"/>
    <property type="project" value="Ensembl"/>
</dbReference>
<dbReference type="GO" id="GO:0050769">
    <property type="term" value="P:positive regulation of neurogenesis"/>
    <property type="evidence" value="ECO:0000316"/>
    <property type="project" value="ARUK-UCL"/>
</dbReference>
<dbReference type="GO" id="GO:0030163">
    <property type="term" value="P:protein catabolic process"/>
    <property type="evidence" value="ECO:0007669"/>
    <property type="project" value="Ensembl"/>
</dbReference>
<dbReference type="GO" id="GO:0016485">
    <property type="term" value="P:protein processing"/>
    <property type="evidence" value="ECO:0000318"/>
    <property type="project" value="GO_Central"/>
</dbReference>
<dbReference type="GO" id="GO:0006508">
    <property type="term" value="P:proteolysis"/>
    <property type="evidence" value="ECO:0000314"/>
    <property type="project" value="UniProtKB"/>
</dbReference>
<dbReference type="GO" id="GO:0090399">
    <property type="term" value="P:replicative senescence"/>
    <property type="evidence" value="ECO:0000270"/>
    <property type="project" value="UniProtKB"/>
</dbReference>
<dbReference type="GO" id="GO:0043627">
    <property type="term" value="P:response to estrogen"/>
    <property type="evidence" value="ECO:0007669"/>
    <property type="project" value="Ensembl"/>
</dbReference>
<dbReference type="GO" id="GO:0019233">
    <property type="term" value="P:sensory perception of pain"/>
    <property type="evidence" value="ECO:0000250"/>
    <property type="project" value="UniProtKB"/>
</dbReference>
<dbReference type="GO" id="GO:0010814">
    <property type="term" value="P:substance P catabolic process"/>
    <property type="evidence" value="ECO:0000314"/>
    <property type="project" value="UniProtKB"/>
</dbReference>
<dbReference type="CDD" id="cd08662">
    <property type="entry name" value="M13"/>
    <property type="match status" value="1"/>
</dbReference>
<dbReference type="FunFam" id="1.10.1380.10:FF:000002">
    <property type="entry name" value="Membrane metalloendopeptidase"/>
    <property type="match status" value="1"/>
</dbReference>
<dbReference type="Gene3D" id="3.40.390.10">
    <property type="entry name" value="Collagenase (Catalytic Domain)"/>
    <property type="match status" value="1"/>
</dbReference>
<dbReference type="Gene3D" id="1.10.1380.10">
    <property type="entry name" value="Neutral endopeptidase , domain2"/>
    <property type="match status" value="1"/>
</dbReference>
<dbReference type="InterPro" id="IPR024079">
    <property type="entry name" value="MetalloPept_cat_dom_sf"/>
</dbReference>
<dbReference type="InterPro" id="IPR000718">
    <property type="entry name" value="Peptidase_M13"/>
</dbReference>
<dbReference type="InterPro" id="IPR018497">
    <property type="entry name" value="Peptidase_M13_C"/>
</dbReference>
<dbReference type="InterPro" id="IPR042089">
    <property type="entry name" value="Peptidase_M13_dom_2"/>
</dbReference>
<dbReference type="InterPro" id="IPR008753">
    <property type="entry name" value="Peptidase_M13_N"/>
</dbReference>
<dbReference type="PANTHER" id="PTHR11733:SF114">
    <property type="entry name" value="NEPRILYSIN"/>
    <property type="match status" value="1"/>
</dbReference>
<dbReference type="PANTHER" id="PTHR11733">
    <property type="entry name" value="ZINC METALLOPROTEASE FAMILY M13 NEPRILYSIN-RELATED"/>
    <property type="match status" value="1"/>
</dbReference>
<dbReference type="Pfam" id="PF01431">
    <property type="entry name" value="Peptidase_M13"/>
    <property type="match status" value="1"/>
</dbReference>
<dbReference type="Pfam" id="PF05649">
    <property type="entry name" value="Peptidase_M13_N"/>
    <property type="match status" value="1"/>
</dbReference>
<dbReference type="PRINTS" id="PR00786">
    <property type="entry name" value="NEPRILYSIN"/>
</dbReference>
<dbReference type="SUPFAM" id="SSF55486">
    <property type="entry name" value="Metalloproteases ('zincins'), catalytic domain"/>
    <property type="match status" value="1"/>
</dbReference>
<dbReference type="PROSITE" id="PS51885">
    <property type="entry name" value="NEPRILYSIN"/>
    <property type="match status" value="1"/>
</dbReference>
<dbReference type="PROSITE" id="PS00142">
    <property type="entry name" value="ZINC_PROTEASE"/>
    <property type="match status" value="1"/>
</dbReference>
<name>NEP_HUMAN</name>
<comment type="function">
    <text evidence="9 10 13 16 20 23 24 25">Thermolysin-like specificity, but is almost confined on acting on polypeptides of up to 30 amino acids (PubMed:15283675, PubMed:6208535, PubMed:6349683, PubMed:8168535). Biologically important in the destruction of opioid peptides such as Met- and Leu-enkephalins by cleavage of a Gly-Phe bond (PubMed:17101991, PubMed:6349683). Catalyzes cleavage of bradykinin, substance P and neurotensin peptides (PubMed:6208535). Able to cleave angiotensin-1, angiotensin-2 and angiotensin 1-9 (PubMed:15283675, PubMed:6349683). Involved in the degradation of atrial natriuretic factor (ANF) and brain natriuretic factor (BNP(1-32)) (PubMed:16254193, PubMed:2531377, PubMed:2972276). Displays UV-inducible elastase activity toward skin preelastic and elastic fibers (PubMed:20876573).</text>
</comment>
<comment type="catalytic activity">
    <reaction evidence="9 20 24 25 26">
        <text>Preferential cleavage of polypeptides between hydrophobic residues, particularly with Phe or Tyr at P1'.</text>
        <dbReference type="EC" id="3.4.24.11"/>
    </reaction>
</comment>
<comment type="catalytic activity">
    <reaction evidence="24">
        <text>substance P + H2O = substance P(1-9) + L-Leu-L-Met-NH2</text>
        <dbReference type="Rhea" id="RHEA:71459"/>
        <dbReference type="ChEBI" id="CHEBI:15377"/>
        <dbReference type="ChEBI" id="CHEBI:190692"/>
        <dbReference type="ChEBI" id="CHEBI:190693"/>
        <dbReference type="ChEBI" id="CHEBI:190700"/>
    </reaction>
    <physiologicalReaction direction="left-to-right" evidence="24">
        <dbReference type="Rhea" id="RHEA:71460"/>
    </physiologicalReaction>
</comment>
<comment type="catalytic activity">
    <reaction evidence="24">
        <text>substance P + H2O = substance P(1-7) + L-Phe-Gly-L-Leu-L-Met-NH2</text>
        <dbReference type="Rhea" id="RHEA:71467"/>
        <dbReference type="ChEBI" id="CHEBI:15377"/>
        <dbReference type="ChEBI" id="CHEBI:190692"/>
        <dbReference type="ChEBI" id="CHEBI:190695"/>
        <dbReference type="ChEBI" id="CHEBI:190698"/>
    </reaction>
    <physiologicalReaction direction="left-to-right" evidence="24">
        <dbReference type="Rhea" id="RHEA:71468"/>
    </physiologicalReaction>
</comment>
<comment type="catalytic activity">
    <reaction evidence="24">
        <text>neurotensin + H2O = neurotensin(1-11) + L-isoleucyl-L-leucine</text>
        <dbReference type="Rhea" id="RHEA:71475"/>
        <dbReference type="ChEBI" id="CHEBI:15377"/>
        <dbReference type="ChEBI" id="CHEBI:147362"/>
        <dbReference type="ChEBI" id="CHEBI:190704"/>
        <dbReference type="ChEBI" id="CHEBI:190706"/>
    </reaction>
    <physiologicalReaction direction="left-to-right" evidence="24">
        <dbReference type="Rhea" id="RHEA:71476"/>
    </physiologicalReaction>
</comment>
<comment type="catalytic activity">
    <reaction evidence="24">
        <text>neurotensin + H2O = neurotensin(1-10) + L-tyrosyl-L-isoleucyl-L-leucine</text>
        <dbReference type="Rhea" id="RHEA:71479"/>
        <dbReference type="ChEBI" id="CHEBI:15377"/>
        <dbReference type="ChEBI" id="CHEBI:147362"/>
        <dbReference type="ChEBI" id="CHEBI:190705"/>
        <dbReference type="ChEBI" id="CHEBI:190707"/>
    </reaction>
    <physiologicalReaction direction="left-to-right" evidence="24">
        <dbReference type="Rhea" id="RHEA:71480"/>
    </physiologicalReaction>
</comment>
<comment type="cofactor">
    <cofactor evidence="8 11">
        <name>Zn(2+)</name>
        <dbReference type="ChEBI" id="CHEBI:29105"/>
    </cofactor>
    <text evidence="8 11">Binds 1 zinc ion per subunit.</text>
</comment>
<comment type="activity regulation">
    <text evidence="10 17">Inhibited in a dose dependent manner by opiorphin (PubMed:17101991). Activated by K49-P1-20, a twenty-residue synthetic peptide shortened from the snake B.asper myotoxin II (PubMed:26931059).</text>
</comment>
<comment type="biophysicochemical properties">
    <kinetics>
        <KM evidence="9">55.1 uM for angiotensin-1</KM>
        <KM evidence="9">179 uM for angiotensin-2</KM>
        <KM evidence="9">111.4 uM for angiotensin 1-9</KM>
    </kinetics>
</comment>
<comment type="interaction">
    <interactant intactId="EBI-353759">
        <id>P08473</id>
    </interactant>
    <interactant intactId="EBI-77613">
        <id>P05067</id>
        <label>APP</label>
    </interactant>
    <organismsDiffer>false</organismsDiffer>
    <experiments>3</experiments>
</comment>
<comment type="interaction">
    <interactant intactId="EBI-353759">
        <id>P08473</id>
    </interactant>
    <interactant intactId="EBI-4280101">
        <id>P21926</id>
        <label>CD9</label>
    </interactant>
    <organismsDiffer>false</organismsDiffer>
    <experiments>6</experiments>
</comment>
<comment type="interaction">
    <interactant intactId="EBI-353759">
        <id>P08473</id>
    </interactant>
    <interactant intactId="EBI-25856644">
        <id>Q06787-7</id>
        <label>FMR1</label>
    </interactant>
    <organismsDiffer>false</organismsDiffer>
    <experiments>3</experiments>
</comment>
<comment type="interaction">
    <interactant intactId="EBI-353759">
        <id>P08473</id>
    </interactant>
    <interactant intactId="EBI-629985">
        <id>P08107</id>
        <label>HSPA1B</label>
    </interactant>
    <organismsDiffer>false</organismsDiffer>
    <experiments>3</experiments>
</comment>
<comment type="interaction">
    <interactant intactId="EBI-353759">
        <id>P08473</id>
    </interactant>
    <interactant intactId="EBI-352682">
        <id>P04792</id>
        <label>HSPB1</label>
    </interactant>
    <organismsDiffer>false</organismsDiffer>
    <experiments>4</experiments>
</comment>
<comment type="subcellular location">
    <subcellularLocation>
        <location evidence="13">Cell membrane</location>
        <topology evidence="2">Single-pass type II membrane protein</topology>
    </subcellularLocation>
</comment>
<comment type="PTM">
    <text evidence="12">Myristoylation is a determinant of membrane targeting.</text>
</comment>
<comment type="PTM">
    <text evidence="6 7 8 11 14">Glycosylation at Asn-628 is necessary both for surface expression and neutral endopeptidase activity.</text>
</comment>
<comment type="disease" evidence="18 20">
    <disease id="DI-04343">
        <name>Charcot-Marie-Tooth disease, axonal, type 2T</name>
        <acronym>CMT2T</acronym>
        <description>An axonal form of Charcot-Marie-Tooth disease, a disorder of the peripheral nervous system, characterized by progressive weakness and atrophy, initially of the peroneal muscles and later of the distal muscles of the arms. Charcot-Marie-Tooth disease is classified in two main groups on the basis of electrophysiologic properties and histopathology: primary peripheral demyelinating neuropathies (designated CMT1 when they are dominantly inherited) and primary peripheral axonal neuropathies (CMT2). Neuropathies of the CMT2 group are characterized by signs of axonal degeneration in the absence of obvious myelin alterations, normal or slightly reduced nerve conduction velocities, and progressive distal muscle weakness and atrophy.</description>
        <dbReference type="MIM" id="617017"/>
    </disease>
    <text>The disease is caused by variants affecting the gene represented in this entry.</text>
</comment>
<comment type="disease" evidence="19">
    <disease id="DI-04796">
        <name>Spinocerebellar ataxia 43</name>
        <acronym>SCA43</acronym>
        <description>A form of spinocerebellar ataxia, a clinically and genetically heterogeneous group of cerebellar disorders. Patients show progressive incoordination of gait and often poor coordination of hands, speech and eye movements, due to degeneration of the cerebellum with variable involvement of the brainstem and spinal cord. SCA43 is a slowly progressive, autosomal dominant form.</description>
        <dbReference type="MIM" id="617018"/>
    </disease>
    <text>The disease is caused by variants affecting the gene represented in this entry.</text>
</comment>
<comment type="miscellaneous">
    <text evidence="15 21 22">Important cell surface marker in the diagnostic of human acute lymphocytic leukemia.</text>
</comment>
<comment type="similarity">
    <text evidence="3 32">Belongs to the peptidase M13 family.</text>
</comment>
<comment type="sequence caution" evidence="32">
    <conflict type="erroneous initiation">
        <sequence resource="EMBL-CDS" id="CAA30157"/>
    </conflict>
    <text>Truncated N-terminus.</text>
</comment>
<comment type="online information" name="Atlas of Genetics and Cytogenetics in Oncology and Haematology">
    <link uri="https://atlasgeneticsoncology.org/gene/41386/MME"/>
</comment>